<evidence type="ECO:0000255" key="1">
    <source>
        <dbReference type="HAMAP-Rule" id="MF_01390"/>
    </source>
</evidence>
<evidence type="ECO:0000305" key="2"/>
<name>MATK_SOYBN</name>
<feature type="chain" id="PRO_0000143401" description="Maturase K">
    <location>
        <begin position="1"/>
        <end position="505"/>
    </location>
</feature>
<feature type="sequence conflict" description="In Ref. 1; AAD52872." evidence="2" ref="1">
    <original>G</original>
    <variation>A</variation>
    <location>
        <position position="384"/>
    </location>
</feature>
<feature type="sequence conflict" description="In Ref. 1; AAD52872." evidence="2" ref="1">
    <original>A</original>
    <variation>P</variation>
    <location>
        <position position="393"/>
    </location>
</feature>
<feature type="sequence conflict" description="In Ref. 1; AAD52872." evidence="2" ref="1">
    <original>K</original>
    <variation>Q</variation>
    <location>
        <position position="483"/>
    </location>
</feature>
<keyword id="KW-0150">Chloroplast</keyword>
<keyword id="KW-0507">mRNA processing</keyword>
<keyword id="KW-0934">Plastid</keyword>
<keyword id="KW-1185">Reference proteome</keyword>
<keyword id="KW-0694">RNA-binding</keyword>
<keyword id="KW-0819">tRNA processing</keyword>
<proteinExistence type="inferred from homology"/>
<sequence length="505" mass="61362">MEESRAYLELHRSRHQDTLYPLFFRESIYGLACGHGSIFVENVGYNNKFSLLIVKRLITRMYQQTHFIIFTNDSNKNPFMGYNNHFYSQIILEGFVVVVEILFSLQFCISSLREFEIVKSYNNLRSIHSIFPFFEDKLIYLNHESDIRIPYPIHLEILVQILRYWIKDVSFFHLLRFFFSYYYNWNSIFTPKKWISTFFSKSNPRFFLFLYNLYVWEYESIFLFLRNKSSKLRLKYFRVFFERIFFYEKIEHLVEVSVKDCSYTLSFFKDTFMHYVRYQGKSILVSKNTPLLINKWKYYFIYLWQCHFDIWSRPGTIHINQLSQHSFHFLGYFLSIRPNLSVVRNQMLQNSFLIKMVMKRLDTIVPIIPLIRSLAKAKFCNVFGHPISKPVWANLSDFDIIDRFLRICRNFSHYYNGSAKKKSLYQIRYILRLSCIKTLARKHKSTARTFLKRLGSEKLLEEFFTEEEETFSLIFPRTSFTLKRLYIGRIWYLDILVRNDFVNHF</sequence>
<gene>
    <name evidence="1" type="primary">matK</name>
</gene>
<protein>
    <recommendedName>
        <fullName evidence="1">Maturase K</fullName>
    </recommendedName>
    <alternativeName>
        <fullName evidence="1">Intron maturase</fullName>
    </alternativeName>
</protein>
<accession>Q9TKS6</accession>
<accession>Q2PMV2</accession>
<reference key="1">
    <citation type="journal article" date="2000" name="Am. J. Bot.">
        <title>Phylogenetic systematics of the tribe Millettieae (Leguminosae) based on chloroplast trnK/matK sequences and its implications for evolutionary patterns in Papilionoideae.</title>
        <authorList>
            <person name="Hu J.-M."/>
            <person name="Lavin M."/>
            <person name="Wojciechowski M.F."/>
            <person name="Sanderson M.J."/>
        </authorList>
    </citation>
    <scope>NUCLEOTIDE SEQUENCE [GENOMIC DNA]</scope>
</reference>
<reference key="2">
    <citation type="journal article" date="2005" name="Plant Mol. Biol.">
        <title>Complete chloroplast genome sequence of Glycine max and comparative analyses with other legume genomes.</title>
        <authorList>
            <person name="Saski C."/>
            <person name="Lee S.-B."/>
            <person name="Daniell H."/>
            <person name="Wood T.C."/>
            <person name="Tomkins J."/>
            <person name="Kim H.-G."/>
            <person name="Jansen R.K."/>
        </authorList>
    </citation>
    <scope>NUCLEOTIDE SEQUENCE [LARGE SCALE GENOMIC DNA]</scope>
    <source>
        <strain>cv. PI 437654</strain>
    </source>
</reference>
<geneLocation type="chloroplast"/>
<comment type="function">
    <text evidence="1">Usually encoded in the trnK tRNA gene intron. Probably assists in splicing its own and other chloroplast group II introns.</text>
</comment>
<comment type="subcellular location">
    <subcellularLocation>
        <location>Plastid</location>
        <location>Chloroplast</location>
    </subcellularLocation>
</comment>
<comment type="similarity">
    <text evidence="1">Belongs to the intron maturase 2 family. MatK subfamily.</text>
</comment>
<organism>
    <name type="scientific">Glycine max</name>
    <name type="common">Soybean</name>
    <name type="synonym">Glycine hispida</name>
    <dbReference type="NCBI Taxonomy" id="3847"/>
    <lineage>
        <taxon>Eukaryota</taxon>
        <taxon>Viridiplantae</taxon>
        <taxon>Streptophyta</taxon>
        <taxon>Embryophyta</taxon>
        <taxon>Tracheophyta</taxon>
        <taxon>Spermatophyta</taxon>
        <taxon>Magnoliopsida</taxon>
        <taxon>eudicotyledons</taxon>
        <taxon>Gunneridae</taxon>
        <taxon>Pentapetalae</taxon>
        <taxon>rosids</taxon>
        <taxon>fabids</taxon>
        <taxon>Fabales</taxon>
        <taxon>Fabaceae</taxon>
        <taxon>Papilionoideae</taxon>
        <taxon>50 kb inversion clade</taxon>
        <taxon>NPAAA clade</taxon>
        <taxon>indigoferoid/millettioid clade</taxon>
        <taxon>Phaseoleae</taxon>
        <taxon>Glycine</taxon>
        <taxon>Glycine subgen. Soja</taxon>
    </lineage>
</organism>
<dbReference type="EMBL" id="AF142700">
    <property type="protein sequence ID" value="AAD52872.1"/>
    <property type="molecule type" value="Genomic_DNA"/>
</dbReference>
<dbReference type="EMBL" id="DQ317523">
    <property type="protein sequence ID" value="ABC25106.1"/>
    <property type="molecule type" value="Genomic_DNA"/>
</dbReference>
<dbReference type="RefSeq" id="YP_538746.1">
    <property type="nucleotide sequence ID" value="NC_007942.1"/>
</dbReference>
<dbReference type="STRING" id="3847.Q9TKS6"/>
<dbReference type="GeneID" id="3989261"/>
<dbReference type="KEGG" id="gmx:3989261"/>
<dbReference type="InParanoid" id="Q9TKS6"/>
<dbReference type="Proteomes" id="UP000008827">
    <property type="component" value="Chloroplast"/>
</dbReference>
<dbReference type="GO" id="GO:0009507">
    <property type="term" value="C:chloroplast"/>
    <property type="evidence" value="ECO:0007669"/>
    <property type="project" value="UniProtKB-SubCell"/>
</dbReference>
<dbReference type="GO" id="GO:0003723">
    <property type="term" value="F:RNA binding"/>
    <property type="evidence" value="ECO:0007669"/>
    <property type="project" value="UniProtKB-KW"/>
</dbReference>
<dbReference type="GO" id="GO:0006397">
    <property type="term" value="P:mRNA processing"/>
    <property type="evidence" value="ECO:0007669"/>
    <property type="project" value="UniProtKB-KW"/>
</dbReference>
<dbReference type="GO" id="GO:0008380">
    <property type="term" value="P:RNA splicing"/>
    <property type="evidence" value="ECO:0007669"/>
    <property type="project" value="UniProtKB-UniRule"/>
</dbReference>
<dbReference type="GO" id="GO:0008033">
    <property type="term" value="P:tRNA processing"/>
    <property type="evidence" value="ECO:0007669"/>
    <property type="project" value="UniProtKB-KW"/>
</dbReference>
<dbReference type="HAMAP" id="MF_01390">
    <property type="entry name" value="MatK"/>
    <property type="match status" value="1"/>
</dbReference>
<dbReference type="InterPro" id="IPR024937">
    <property type="entry name" value="Domain_X"/>
</dbReference>
<dbReference type="InterPro" id="IPR002866">
    <property type="entry name" value="Maturase_MatK"/>
</dbReference>
<dbReference type="InterPro" id="IPR024942">
    <property type="entry name" value="Maturase_MatK_N"/>
</dbReference>
<dbReference type="PANTHER" id="PTHR34811">
    <property type="entry name" value="MATURASE K"/>
    <property type="match status" value="1"/>
</dbReference>
<dbReference type="PANTHER" id="PTHR34811:SF1">
    <property type="entry name" value="MATURASE K"/>
    <property type="match status" value="1"/>
</dbReference>
<dbReference type="Pfam" id="PF01348">
    <property type="entry name" value="Intron_maturas2"/>
    <property type="match status" value="1"/>
</dbReference>
<dbReference type="Pfam" id="PF01824">
    <property type="entry name" value="MatK_N"/>
    <property type="match status" value="1"/>
</dbReference>